<protein>
    <recommendedName>
        <fullName evidence="1">NAD(P)H-quinone oxidoreductase subunit O</fullName>
        <ecNumber evidence="1">7.1.1.-</ecNumber>
    </recommendedName>
    <alternativeName>
        <fullName evidence="1">NAD(P)H dehydrogenase I subunit O</fullName>
        <shortName evidence="1">NDH-1 subunit O</shortName>
        <shortName evidence="1">NDH-O</shortName>
    </alternativeName>
</protein>
<proteinExistence type="inferred from homology"/>
<gene>
    <name evidence="1" type="primary">ndhO</name>
    <name type="ordered locus">PCC7424_2177</name>
</gene>
<dbReference type="EC" id="7.1.1.-" evidence="1"/>
<dbReference type="EMBL" id="CP001291">
    <property type="protein sequence ID" value="ACK70599.1"/>
    <property type="molecule type" value="Genomic_DNA"/>
</dbReference>
<dbReference type="RefSeq" id="WP_015954205.1">
    <property type="nucleotide sequence ID" value="NC_011729.1"/>
</dbReference>
<dbReference type="SMR" id="B7KGC8"/>
<dbReference type="STRING" id="65393.PCC7424_2177"/>
<dbReference type="KEGG" id="cyc:PCC7424_2177"/>
<dbReference type="eggNOG" id="ENOG5032XZT">
    <property type="taxonomic scope" value="Bacteria"/>
</dbReference>
<dbReference type="HOGENOM" id="CLU_195299_0_0_3"/>
<dbReference type="OrthoDB" id="426633at2"/>
<dbReference type="Proteomes" id="UP000002384">
    <property type="component" value="Chromosome"/>
</dbReference>
<dbReference type="GO" id="GO:0031676">
    <property type="term" value="C:plasma membrane-derived thylakoid membrane"/>
    <property type="evidence" value="ECO:0007669"/>
    <property type="project" value="UniProtKB-SubCell"/>
</dbReference>
<dbReference type="GO" id="GO:0016655">
    <property type="term" value="F:oxidoreductase activity, acting on NAD(P)H, quinone or similar compound as acceptor"/>
    <property type="evidence" value="ECO:0007669"/>
    <property type="project" value="UniProtKB-UniRule"/>
</dbReference>
<dbReference type="GO" id="GO:0048038">
    <property type="term" value="F:quinone binding"/>
    <property type="evidence" value="ECO:0007669"/>
    <property type="project" value="UniProtKB-KW"/>
</dbReference>
<dbReference type="HAMAP" id="MF_01354">
    <property type="entry name" value="NDH1_NDH1O"/>
    <property type="match status" value="1"/>
</dbReference>
<dbReference type="InterPro" id="IPR020905">
    <property type="entry name" value="NdhO"/>
</dbReference>
<dbReference type="Pfam" id="PF11910">
    <property type="entry name" value="NdhO"/>
    <property type="match status" value="1"/>
</dbReference>
<comment type="function">
    <text evidence="1">NDH-1 shuttles electrons from an unknown electron donor, via FMN and iron-sulfur (Fe-S) centers, to quinones in the respiratory and/or the photosynthetic chain. The immediate electron acceptor for the enzyme in this species is believed to be plastoquinone. Couples the redox reaction to proton translocation, and thus conserves the redox energy in a proton gradient. Cyanobacterial NDH-1 also plays a role in inorganic carbon-concentration.</text>
</comment>
<comment type="catalytic activity">
    <reaction evidence="1">
        <text>a plastoquinone + NADH + (n+1) H(+)(in) = a plastoquinol + NAD(+) + n H(+)(out)</text>
        <dbReference type="Rhea" id="RHEA:42608"/>
        <dbReference type="Rhea" id="RHEA-COMP:9561"/>
        <dbReference type="Rhea" id="RHEA-COMP:9562"/>
        <dbReference type="ChEBI" id="CHEBI:15378"/>
        <dbReference type="ChEBI" id="CHEBI:17757"/>
        <dbReference type="ChEBI" id="CHEBI:57540"/>
        <dbReference type="ChEBI" id="CHEBI:57945"/>
        <dbReference type="ChEBI" id="CHEBI:62192"/>
    </reaction>
</comment>
<comment type="catalytic activity">
    <reaction evidence="1">
        <text>a plastoquinone + NADPH + (n+1) H(+)(in) = a plastoquinol + NADP(+) + n H(+)(out)</text>
        <dbReference type="Rhea" id="RHEA:42612"/>
        <dbReference type="Rhea" id="RHEA-COMP:9561"/>
        <dbReference type="Rhea" id="RHEA-COMP:9562"/>
        <dbReference type="ChEBI" id="CHEBI:15378"/>
        <dbReference type="ChEBI" id="CHEBI:17757"/>
        <dbReference type="ChEBI" id="CHEBI:57783"/>
        <dbReference type="ChEBI" id="CHEBI:58349"/>
        <dbReference type="ChEBI" id="CHEBI:62192"/>
    </reaction>
</comment>
<comment type="subunit">
    <text evidence="1">NDH-1 can be composed of about 15 different subunits; different subcomplexes with different compositions have been identified which probably have different functions.</text>
</comment>
<comment type="subcellular location">
    <subcellularLocation>
        <location evidence="1">Cellular thylakoid membrane</location>
        <topology evidence="1">Peripheral membrane protein</topology>
        <orientation evidence="1">Cytoplasmic side</orientation>
    </subcellularLocation>
</comment>
<comment type="similarity">
    <text evidence="1">Belongs to the complex I NdhO subunit family.</text>
</comment>
<name>NDHO_GLOC7</name>
<sequence>MAGKIKKGALVRVVREKLENSLEATASDTRFPSYLFESKGEIVDMNDEYALLRFYTPTPNVWLRIDQLELVE</sequence>
<reference key="1">
    <citation type="journal article" date="2011" name="MBio">
        <title>Novel metabolic attributes of the genus Cyanothece, comprising a group of unicellular nitrogen-fixing Cyanobacteria.</title>
        <authorList>
            <person name="Bandyopadhyay A."/>
            <person name="Elvitigala T."/>
            <person name="Welsh E."/>
            <person name="Stockel J."/>
            <person name="Liberton M."/>
            <person name="Min H."/>
            <person name="Sherman L.A."/>
            <person name="Pakrasi H.B."/>
        </authorList>
    </citation>
    <scope>NUCLEOTIDE SEQUENCE [LARGE SCALE GENOMIC DNA]</scope>
    <source>
        <strain>PCC 7424</strain>
    </source>
</reference>
<keyword id="KW-0472">Membrane</keyword>
<keyword id="KW-0520">NAD</keyword>
<keyword id="KW-0521">NADP</keyword>
<keyword id="KW-0618">Plastoquinone</keyword>
<keyword id="KW-0874">Quinone</keyword>
<keyword id="KW-1185">Reference proteome</keyword>
<keyword id="KW-0793">Thylakoid</keyword>
<keyword id="KW-1278">Translocase</keyword>
<keyword id="KW-0813">Transport</keyword>
<organism>
    <name type="scientific">Gloeothece citriformis (strain PCC 7424)</name>
    <name type="common">Cyanothece sp. (strain PCC 7424)</name>
    <dbReference type="NCBI Taxonomy" id="65393"/>
    <lineage>
        <taxon>Bacteria</taxon>
        <taxon>Bacillati</taxon>
        <taxon>Cyanobacteriota</taxon>
        <taxon>Cyanophyceae</taxon>
        <taxon>Oscillatoriophycideae</taxon>
        <taxon>Chroococcales</taxon>
        <taxon>Aphanothecaceae</taxon>
        <taxon>Gloeothece</taxon>
        <taxon>Gloeothece citriformis</taxon>
    </lineage>
</organism>
<accession>B7KGC8</accession>
<evidence type="ECO:0000255" key="1">
    <source>
        <dbReference type="HAMAP-Rule" id="MF_01354"/>
    </source>
</evidence>
<feature type="chain" id="PRO_1000143676" description="NAD(P)H-quinone oxidoreductase subunit O">
    <location>
        <begin position="1"/>
        <end position="72"/>
    </location>
</feature>